<protein>
    <recommendedName>
        <fullName evidence="1">L-seryl-tRNA(Sec) selenium transferase</fullName>
        <ecNumber evidence="1">2.9.1.1</ecNumber>
    </recommendedName>
    <alternativeName>
        <fullName evidence="1">Selenocysteine synthase</fullName>
        <shortName evidence="1">Sec synthase</shortName>
    </alternativeName>
    <alternativeName>
        <fullName evidence="1">Selenocysteinyl-tRNA(Sec) synthase</fullName>
    </alternativeName>
</protein>
<evidence type="ECO:0000255" key="1">
    <source>
        <dbReference type="HAMAP-Rule" id="MF_00423"/>
    </source>
</evidence>
<reference key="1">
    <citation type="submission" date="2007-05" db="EMBL/GenBank/DDBJ databases">
        <title>Complete sequence of Pseudomonas putida F1.</title>
        <authorList>
            <consortium name="US DOE Joint Genome Institute"/>
            <person name="Copeland A."/>
            <person name="Lucas S."/>
            <person name="Lapidus A."/>
            <person name="Barry K."/>
            <person name="Detter J.C."/>
            <person name="Glavina del Rio T."/>
            <person name="Hammon N."/>
            <person name="Israni S."/>
            <person name="Dalin E."/>
            <person name="Tice H."/>
            <person name="Pitluck S."/>
            <person name="Chain P."/>
            <person name="Malfatti S."/>
            <person name="Shin M."/>
            <person name="Vergez L."/>
            <person name="Schmutz J."/>
            <person name="Larimer F."/>
            <person name="Land M."/>
            <person name="Hauser L."/>
            <person name="Kyrpides N."/>
            <person name="Lykidis A."/>
            <person name="Parales R."/>
            <person name="Richardson P."/>
        </authorList>
    </citation>
    <scope>NUCLEOTIDE SEQUENCE [LARGE SCALE GENOMIC DNA]</scope>
    <source>
        <strain>ATCC 700007 / DSM 6899 / JCM 31910 / BCRC 17059 / LMG 24140 / F1</strain>
    </source>
</reference>
<gene>
    <name evidence="1" type="primary">selA</name>
    <name type="ordered locus">Pput_0527</name>
</gene>
<sequence>MSNSLASDTPRLPSIDTLLRHPACLPLIDRHGRDAVLNTLRQLLDDLREPARNGELGSAELAPEILLGRSGERLALQQRSQVRRVFNLTGTVLHTNLGRALLPEEAIEAMQTAARYPLNLEFDLATGKRGDRDDLIEGLIRELTGAEAVTVVNNNAAAVLLALNSLGARKEGIISRGELIEIGGAFRIPDIMARAGVKLHEVGTTNRTHARDYEAAIGPRTGLLMRVHCSNYSIQGFTTQVPTAELARIAHQHQLPLLEDLGSGSLLDLTRWGLPAEPTVRQALADGADIVTFSGDKLLGGPQAGIIVGHKDLITRIKKNPLKRALRVDKITLAALEAVLALYRNPDRLAERLPSLRLLTRSQAEIQAQAERLAPELQARLGEQWAIRVEPALGMIGSGSQPVARLPSAALCLRPQVSKKLRGRSLHVLERALRDLPVPVLGRIDDDALWLDLRQLDDEAQWLAQLPALQLGPVQ</sequence>
<proteinExistence type="inferred from homology"/>
<comment type="function">
    <text evidence="1">Converts seryl-tRNA(Sec) to selenocysteinyl-tRNA(Sec) required for selenoprotein biosynthesis.</text>
</comment>
<comment type="catalytic activity">
    <reaction evidence="1">
        <text>L-seryl-tRNA(Sec) + selenophosphate + H(+) = L-selenocysteinyl-tRNA(Sec) + phosphate</text>
        <dbReference type="Rhea" id="RHEA:22728"/>
        <dbReference type="Rhea" id="RHEA-COMP:9742"/>
        <dbReference type="Rhea" id="RHEA-COMP:9743"/>
        <dbReference type="ChEBI" id="CHEBI:15378"/>
        <dbReference type="ChEBI" id="CHEBI:16144"/>
        <dbReference type="ChEBI" id="CHEBI:43474"/>
        <dbReference type="ChEBI" id="CHEBI:78533"/>
        <dbReference type="ChEBI" id="CHEBI:78573"/>
        <dbReference type="EC" id="2.9.1.1"/>
    </reaction>
</comment>
<comment type="cofactor">
    <cofactor evidence="1">
        <name>pyridoxal 5'-phosphate</name>
        <dbReference type="ChEBI" id="CHEBI:597326"/>
    </cofactor>
</comment>
<comment type="pathway">
    <text evidence="1">Aminoacyl-tRNA biosynthesis; selenocysteinyl-tRNA(Sec) biosynthesis; selenocysteinyl-tRNA(Sec) from L-seryl-tRNA(Sec) (bacterial route): step 1/1.</text>
</comment>
<comment type="subcellular location">
    <subcellularLocation>
        <location evidence="1">Cytoplasm</location>
    </subcellularLocation>
</comment>
<comment type="similarity">
    <text evidence="1">Belongs to the SelA family.</text>
</comment>
<accession>A5VXT7</accession>
<feature type="chain" id="PRO_1000050377" description="L-seryl-tRNA(Sec) selenium transferase">
    <location>
        <begin position="1"/>
        <end position="475"/>
    </location>
</feature>
<feature type="modified residue" description="N6-(pyridoxal phosphate)lysine" evidence="1">
    <location>
        <position position="297"/>
    </location>
</feature>
<name>SELA_PSEP1</name>
<organism>
    <name type="scientific">Pseudomonas putida (strain ATCC 700007 / DSM 6899 / JCM 31910 / BCRC 17059 / LMG 24140 / F1)</name>
    <dbReference type="NCBI Taxonomy" id="351746"/>
    <lineage>
        <taxon>Bacteria</taxon>
        <taxon>Pseudomonadati</taxon>
        <taxon>Pseudomonadota</taxon>
        <taxon>Gammaproteobacteria</taxon>
        <taxon>Pseudomonadales</taxon>
        <taxon>Pseudomonadaceae</taxon>
        <taxon>Pseudomonas</taxon>
    </lineage>
</organism>
<keyword id="KW-0963">Cytoplasm</keyword>
<keyword id="KW-0648">Protein biosynthesis</keyword>
<keyword id="KW-0663">Pyridoxal phosphate</keyword>
<keyword id="KW-0711">Selenium</keyword>
<keyword id="KW-0808">Transferase</keyword>
<dbReference type="EC" id="2.9.1.1" evidence="1"/>
<dbReference type="EMBL" id="CP000712">
    <property type="protein sequence ID" value="ABQ76697.1"/>
    <property type="molecule type" value="Genomic_DNA"/>
</dbReference>
<dbReference type="SMR" id="A5VXT7"/>
<dbReference type="KEGG" id="ppf:Pput_0527"/>
<dbReference type="eggNOG" id="COG1921">
    <property type="taxonomic scope" value="Bacteria"/>
</dbReference>
<dbReference type="HOGENOM" id="CLU_038142_1_0_6"/>
<dbReference type="UniPathway" id="UPA00906">
    <property type="reaction ID" value="UER00896"/>
</dbReference>
<dbReference type="GO" id="GO:0005737">
    <property type="term" value="C:cytoplasm"/>
    <property type="evidence" value="ECO:0007669"/>
    <property type="project" value="UniProtKB-SubCell"/>
</dbReference>
<dbReference type="GO" id="GO:0004125">
    <property type="term" value="F:L-seryl-tRNA(Sec) selenium transferase activity"/>
    <property type="evidence" value="ECO:0007669"/>
    <property type="project" value="UniProtKB-UniRule"/>
</dbReference>
<dbReference type="GO" id="GO:0001717">
    <property type="term" value="P:conversion of seryl-tRNAsec to selenocys-tRNAsec"/>
    <property type="evidence" value="ECO:0007669"/>
    <property type="project" value="UniProtKB-UniRule"/>
</dbReference>
<dbReference type="GO" id="GO:0001514">
    <property type="term" value="P:selenocysteine incorporation"/>
    <property type="evidence" value="ECO:0007669"/>
    <property type="project" value="UniProtKB-UniRule"/>
</dbReference>
<dbReference type="FunFam" id="3.40.640.10:FF:000028">
    <property type="entry name" value="L-seryl-tRNA(Sec) selenium transferase"/>
    <property type="match status" value="1"/>
</dbReference>
<dbReference type="Gene3D" id="3.90.1150.180">
    <property type="match status" value="1"/>
</dbReference>
<dbReference type="Gene3D" id="3.40.640.10">
    <property type="entry name" value="Type I PLP-dependent aspartate aminotransferase-like (Major domain)"/>
    <property type="match status" value="1"/>
</dbReference>
<dbReference type="HAMAP" id="MF_00423">
    <property type="entry name" value="SelA"/>
    <property type="match status" value="1"/>
</dbReference>
<dbReference type="InterPro" id="IPR015424">
    <property type="entry name" value="PyrdxlP-dep_Trfase"/>
</dbReference>
<dbReference type="InterPro" id="IPR015421">
    <property type="entry name" value="PyrdxlP-dep_Trfase_major"/>
</dbReference>
<dbReference type="InterPro" id="IPR018319">
    <property type="entry name" value="SelA-like"/>
</dbReference>
<dbReference type="InterPro" id="IPR004534">
    <property type="entry name" value="SelA_trans"/>
</dbReference>
<dbReference type="InterPro" id="IPR025862">
    <property type="entry name" value="SelA_trans_N_dom"/>
</dbReference>
<dbReference type="NCBIfam" id="TIGR00474">
    <property type="entry name" value="selA"/>
    <property type="match status" value="1"/>
</dbReference>
<dbReference type="PANTHER" id="PTHR32328">
    <property type="entry name" value="L-SERYL-TRNA(SEC) SELENIUM TRANSFERASE"/>
    <property type="match status" value="1"/>
</dbReference>
<dbReference type="PANTHER" id="PTHR32328:SF0">
    <property type="entry name" value="L-SERYL-TRNA(SEC) SELENIUM TRANSFERASE"/>
    <property type="match status" value="1"/>
</dbReference>
<dbReference type="Pfam" id="PF12390">
    <property type="entry name" value="Se-cys_synth_N"/>
    <property type="match status" value="1"/>
</dbReference>
<dbReference type="Pfam" id="PF03841">
    <property type="entry name" value="SelA"/>
    <property type="match status" value="1"/>
</dbReference>
<dbReference type="SUPFAM" id="SSF53383">
    <property type="entry name" value="PLP-dependent transferases"/>
    <property type="match status" value="1"/>
</dbReference>